<name>FIMF_SALTY</name>
<accession>P37926</accession>
<gene>
    <name type="primary">fimF</name>
    <name type="ordered locus">STM0548</name>
</gene>
<sequence>MILRRVFIAIGCVLFSPLSQANSSLGEVNIELRGNVVDFTCAVVAGDSNKSVNLGTWPTKQLHAAGDATQPVAFSLKLEGCPPGSASITFSGTPAPGTALLALADTAMAQKLAIEIRDGDQRRLPLEQASKAVDIDNNGNATLKFYANYIALADGVQPGLANADATFLINYN</sequence>
<reference key="1">
    <citation type="submission" date="1993-06" db="EMBL/GenBank/DDBJ databases">
        <authorList>
            <person name="Swenson D.L."/>
            <person name="Clegg S."/>
        </authorList>
    </citation>
    <scope>NUCLEOTIDE SEQUENCE [GENOMIC DNA]</scope>
</reference>
<reference key="2">
    <citation type="journal article" date="2001" name="Nature">
        <title>Complete genome sequence of Salmonella enterica serovar Typhimurium LT2.</title>
        <authorList>
            <person name="McClelland M."/>
            <person name="Sanderson K.E."/>
            <person name="Spieth J."/>
            <person name="Clifton S.W."/>
            <person name="Latreille P."/>
            <person name="Courtney L."/>
            <person name="Porwollik S."/>
            <person name="Ali J."/>
            <person name="Dante M."/>
            <person name="Du F."/>
            <person name="Hou S."/>
            <person name="Layman D."/>
            <person name="Leonard S."/>
            <person name="Nguyen C."/>
            <person name="Scott K."/>
            <person name="Holmes A."/>
            <person name="Grewal N."/>
            <person name="Mulvaney E."/>
            <person name="Ryan E."/>
            <person name="Sun H."/>
            <person name="Florea L."/>
            <person name="Miller W."/>
            <person name="Stoneking T."/>
            <person name="Nhan M."/>
            <person name="Waterston R."/>
            <person name="Wilson R.K."/>
        </authorList>
    </citation>
    <scope>NUCLEOTIDE SEQUENCE [LARGE SCALE GENOMIC DNA]</scope>
    <source>
        <strain>LT2 / SGSC1412 / ATCC 700720</strain>
    </source>
</reference>
<protein>
    <recommendedName>
        <fullName>Fimbrial-like protein FimF</fullName>
    </recommendedName>
</protein>
<feature type="signal peptide" evidence="1">
    <location>
        <begin position="1"/>
        <end position="21"/>
    </location>
</feature>
<feature type="chain" id="PRO_0000009209" description="Fimbrial-like protein FimF">
    <location>
        <begin position="22"/>
        <end position="172"/>
    </location>
</feature>
<feature type="disulfide bond" evidence="2">
    <location>
        <begin position="41"/>
        <end position="81"/>
    </location>
</feature>
<proteinExistence type="inferred from homology"/>
<comment type="subcellular location">
    <subcellularLocation>
        <location evidence="2">Fimbrium</location>
    </subcellularLocation>
</comment>
<comment type="similarity">
    <text evidence="2">Belongs to the fimbrial protein family.</text>
</comment>
<dbReference type="EMBL" id="L19338">
    <property type="protein sequence ID" value="AAA75421.1"/>
    <property type="molecule type" value="Genomic_DNA"/>
</dbReference>
<dbReference type="EMBL" id="AE006468">
    <property type="protein sequence ID" value="AAL19502.1"/>
    <property type="molecule type" value="Genomic_DNA"/>
</dbReference>
<dbReference type="RefSeq" id="NP_459543.1">
    <property type="nucleotide sequence ID" value="NC_003197.2"/>
</dbReference>
<dbReference type="SMR" id="P37926"/>
<dbReference type="STRING" id="99287.STM0548"/>
<dbReference type="PaxDb" id="99287-STM0548"/>
<dbReference type="GeneID" id="1252068"/>
<dbReference type="KEGG" id="stm:STM0548"/>
<dbReference type="PATRIC" id="fig|99287.12.peg.581"/>
<dbReference type="HOGENOM" id="CLU_088965_0_2_6"/>
<dbReference type="OMA" id="ATFMINY"/>
<dbReference type="PhylomeDB" id="P37926"/>
<dbReference type="BioCyc" id="SENT99287:STM0548-MONOMER"/>
<dbReference type="Proteomes" id="UP000001014">
    <property type="component" value="Chromosome"/>
</dbReference>
<dbReference type="GO" id="GO:0009289">
    <property type="term" value="C:pilus"/>
    <property type="evidence" value="ECO:0000318"/>
    <property type="project" value="GO_Central"/>
</dbReference>
<dbReference type="GO" id="GO:0043709">
    <property type="term" value="P:cell adhesion involved in single-species biofilm formation"/>
    <property type="evidence" value="ECO:0000318"/>
    <property type="project" value="GO_Central"/>
</dbReference>
<dbReference type="FunFam" id="2.60.40.1090:FF:000007">
    <property type="entry name" value="Fimbrial-like protein FimF"/>
    <property type="match status" value="1"/>
</dbReference>
<dbReference type="Gene3D" id="2.60.40.1090">
    <property type="entry name" value="Fimbrial-type adhesion domain"/>
    <property type="match status" value="1"/>
</dbReference>
<dbReference type="InterPro" id="IPR000259">
    <property type="entry name" value="Adhesion_dom_fimbrial"/>
</dbReference>
<dbReference type="InterPro" id="IPR036937">
    <property type="entry name" value="Adhesion_dom_fimbrial_sf"/>
</dbReference>
<dbReference type="InterPro" id="IPR008966">
    <property type="entry name" value="Adhesion_dom_sf"/>
</dbReference>
<dbReference type="InterPro" id="IPR050263">
    <property type="entry name" value="Bact_Fimbrial_Adh_Pro"/>
</dbReference>
<dbReference type="NCBIfam" id="NF007402">
    <property type="entry name" value="PRK09934.1"/>
    <property type="match status" value="1"/>
</dbReference>
<dbReference type="PANTHER" id="PTHR33420">
    <property type="entry name" value="FIMBRIAL SUBUNIT ELFA-RELATED"/>
    <property type="match status" value="1"/>
</dbReference>
<dbReference type="PANTHER" id="PTHR33420:SF4">
    <property type="entry name" value="FIMBRIAL-LIKE PROTEIN FIMF"/>
    <property type="match status" value="1"/>
</dbReference>
<dbReference type="Pfam" id="PF00419">
    <property type="entry name" value="Fimbrial"/>
    <property type="match status" value="1"/>
</dbReference>
<dbReference type="SUPFAM" id="SSF49401">
    <property type="entry name" value="Bacterial adhesins"/>
    <property type="match status" value="1"/>
</dbReference>
<keyword id="KW-1015">Disulfide bond</keyword>
<keyword id="KW-0281">Fimbrium</keyword>
<keyword id="KW-1185">Reference proteome</keyword>
<keyword id="KW-0732">Signal</keyword>
<organism>
    <name type="scientific">Salmonella typhimurium (strain LT2 / SGSC1412 / ATCC 700720)</name>
    <dbReference type="NCBI Taxonomy" id="99287"/>
    <lineage>
        <taxon>Bacteria</taxon>
        <taxon>Pseudomonadati</taxon>
        <taxon>Pseudomonadota</taxon>
        <taxon>Gammaproteobacteria</taxon>
        <taxon>Enterobacterales</taxon>
        <taxon>Enterobacteriaceae</taxon>
        <taxon>Salmonella</taxon>
    </lineage>
</organism>
<evidence type="ECO:0000255" key="1"/>
<evidence type="ECO:0000305" key="2"/>